<keyword id="KW-0217">Developmental protein</keyword>
<keyword id="KW-1015">Disulfide bond</keyword>
<keyword id="KW-0272">Extracellular matrix</keyword>
<keyword id="KW-0325">Glycoprotein</keyword>
<keyword id="KW-0449">Lipoprotein</keyword>
<keyword id="KW-1185">Reference proteome</keyword>
<keyword id="KW-0964">Secreted</keyword>
<keyword id="KW-0732">Signal</keyword>
<keyword id="KW-0879">Wnt signaling pathway</keyword>
<reference key="1">
    <citation type="journal article" date="2003" name="Nature">
        <title>Comparative analyses of multi-species sequences from targeted genomic regions.</title>
        <authorList>
            <person name="Thomas J.W."/>
            <person name="Touchman J.W."/>
            <person name="Blakesley R.W."/>
            <person name="Bouffard G.G."/>
            <person name="Beckstrom-Sternberg S.M."/>
            <person name="Margulies E.H."/>
            <person name="Blanchette M."/>
            <person name="Siepel A.C."/>
            <person name="Thomas P.J."/>
            <person name="McDowell J.C."/>
            <person name="Maskeri B."/>
            <person name="Hansen N.F."/>
            <person name="Schwartz M.S."/>
            <person name="Weber R.J."/>
            <person name="Kent W.J."/>
            <person name="Karolchik D."/>
            <person name="Bruen T.C."/>
            <person name="Bevan R."/>
            <person name="Cutler D.J."/>
            <person name="Schwartz S."/>
            <person name="Elnitski L."/>
            <person name="Idol J.R."/>
            <person name="Prasad A.B."/>
            <person name="Lee-Lin S.-Q."/>
            <person name="Maduro V.V.B."/>
            <person name="Summers T.J."/>
            <person name="Portnoy M.E."/>
            <person name="Dietrich N.L."/>
            <person name="Akhter N."/>
            <person name="Ayele K."/>
            <person name="Benjamin B."/>
            <person name="Cariaga K."/>
            <person name="Brinkley C.P."/>
            <person name="Brooks S.Y."/>
            <person name="Granite S."/>
            <person name="Guan X."/>
            <person name="Gupta J."/>
            <person name="Haghighi P."/>
            <person name="Ho S.-L."/>
            <person name="Huang M.C."/>
            <person name="Karlins E."/>
            <person name="Laric P.L."/>
            <person name="Legaspi R."/>
            <person name="Lim M.J."/>
            <person name="Maduro Q.L."/>
            <person name="Masiello C.A."/>
            <person name="Mastrian S.D."/>
            <person name="McCloskey J.C."/>
            <person name="Pearson R."/>
            <person name="Stantripop S."/>
            <person name="Tiongson E.E."/>
            <person name="Tran J.T."/>
            <person name="Tsurgeon C."/>
            <person name="Vogt J.L."/>
            <person name="Walker M.A."/>
            <person name="Wetherby K.D."/>
            <person name="Wiggins L.S."/>
            <person name="Young A.C."/>
            <person name="Zhang L.-H."/>
            <person name="Osoegawa K."/>
            <person name="Zhu B."/>
            <person name="Zhao B."/>
            <person name="Shu C.L."/>
            <person name="De Jong P.J."/>
            <person name="Lawrence C.E."/>
            <person name="Smit A.F."/>
            <person name="Chakravarti A."/>
            <person name="Haussler D."/>
            <person name="Green P."/>
            <person name="Miller W."/>
            <person name="Green E.D."/>
        </authorList>
    </citation>
    <scope>NUCLEOTIDE SEQUENCE [LARGE SCALE GENOMIC DNA]</scope>
</reference>
<protein>
    <recommendedName>
        <fullName>Protein Wnt-2</fullName>
    </recommendedName>
</protein>
<proteinExistence type="inferred from homology"/>
<feature type="signal peptide" evidence="5">
    <location>
        <begin position="1"/>
        <end position="25"/>
    </location>
</feature>
<feature type="chain" id="PRO_0000279199" description="Protein Wnt-2">
    <location>
        <begin position="26"/>
        <end position="360"/>
    </location>
</feature>
<feature type="lipid moiety-binding region" description="O-palmitoleoyl serine; by PORCN" evidence="4">
    <location>
        <position position="212"/>
    </location>
</feature>
<feature type="glycosylation site" description="N-linked (GlcNAc...) asparagine" evidence="5">
    <location>
        <position position="295"/>
    </location>
</feature>
<feature type="disulfide bond" evidence="3">
    <location>
        <begin position="76"/>
        <end position="87"/>
    </location>
</feature>
<feature type="disulfide bond" evidence="3">
    <location>
        <begin position="127"/>
        <end position="135"/>
    </location>
</feature>
<feature type="disulfide bond" evidence="3">
    <location>
        <begin position="137"/>
        <end position="157"/>
    </location>
</feature>
<feature type="disulfide bond" evidence="3">
    <location>
        <begin position="206"/>
        <end position="220"/>
    </location>
</feature>
<feature type="disulfide bond" evidence="3">
    <location>
        <begin position="208"/>
        <end position="215"/>
    </location>
</feature>
<feature type="disulfide bond" evidence="3">
    <location>
        <begin position="278"/>
        <end position="309"/>
    </location>
</feature>
<feature type="disulfide bond" evidence="3">
    <location>
        <begin position="294"/>
        <end position="304"/>
    </location>
</feature>
<feature type="disulfide bond" evidence="3">
    <location>
        <begin position="308"/>
        <end position="348"/>
    </location>
</feature>
<feature type="disulfide bond" evidence="3">
    <location>
        <begin position="324"/>
        <end position="339"/>
    </location>
</feature>
<feature type="disulfide bond" evidence="3">
    <location>
        <begin position="326"/>
        <end position="336"/>
    </location>
</feature>
<feature type="disulfide bond" evidence="3">
    <location>
        <begin position="331"/>
        <end position="332"/>
    </location>
</feature>
<comment type="function">
    <text evidence="1 2">Ligand for members of the frizzled family of seven transmembrane receptors. Functions in the canonical Wnt signaling pathway that results in activation of transcription factors of the TCF/LEF family (By similarity). Functions as a upstream regulator of FGF10 expression. Plays an important role in embryonic lung development. May contribute to embryonic brain development by regulating the proliferation of dopaminergic precursors and neurons (By similarity).</text>
</comment>
<comment type="subcellular location">
    <subcellularLocation>
        <location evidence="1">Secreted</location>
        <location evidence="1">Extracellular space</location>
        <location evidence="1">Extracellular matrix</location>
    </subcellularLocation>
    <subcellularLocation>
        <location evidence="1">Secreted</location>
    </subcellularLocation>
</comment>
<comment type="PTM">
    <text evidence="1">Palmitoleoylation is required for efficient binding to frizzled receptors. Depalmitoleoylation leads to Wnt signaling pathway inhibition.</text>
</comment>
<comment type="similarity">
    <text evidence="6">Belongs to the Wnt family.</text>
</comment>
<sequence>MNAPLGGIWLWLPLLLTWLTPEVNSSWWYMRATGGSSRVMCDNVPGLVSSQRQLCHRHPDVMRAISQGVAEWTAECQHQFRQHRWNCNTLDRDHSLFGRVLLRSSRESAFVYAISSAGVVFAITRACSQGEVKSCSCDPKKMGSAKDSKGIFDWGGCSDNIDYGIKFARAFVDAKERKGKDARALMNLHNNRAGRKAVKRFLKQECKCHGVSGSCTLRTCWLAMADFRKTGDYLWRKYNGAIQVVMNQDGTGFTVANERFKKPTKNDLVYFENSPDYCIRDREAGSLGTAGRVCNLTSRGMDSCEVMCCGRGYDTSHVTRMTKCGCKFHWCCAVRCQDCLEALDVHTCKAPKNADWTTPT</sequence>
<evidence type="ECO:0000250" key="1">
    <source>
        <dbReference type="UniProtKB" id="P09544"/>
    </source>
</evidence>
<evidence type="ECO:0000250" key="2">
    <source>
        <dbReference type="UniProtKB" id="P21552"/>
    </source>
</evidence>
<evidence type="ECO:0000250" key="3">
    <source>
        <dbReference type="UniProtKB" id="P28026"/>
    </source>
</evidence>
<evidence type="ECO:0000250" key="4">
    <source>
        <dbReference type="UniProtKB" id="P56704"/>
    </source>
</evidence>
<evidence type="ECO:0000255" key="5"/>
<evidence type="ECO:0000305" key="6"/>
<gene>
    <name type="primary">WNT2</name>
</gene>
<dbReference type="EMBL" id="DP000233">
    <property type="protein sequence ID" value="AAR16225.1"/>
    <property type="molecule type" value="Genomic_DNA"/>
</dbReference>
<dbReference type="RefSeq" id="NP_001162189.1">
    <property type="nucleotide sequence ID" value="NM_001168718.1"/>
</dbReference>
<dbReference type="SMR" id="A0M8S1"/>
<dbReference type="STRING" id="9555.ENSPANP00000006658"/>
<dbReference type="GlyCosmos" id="A0M8S1">
    <property type="glycosylation" value="1 site, No reported glycans"/>
</dbReference>
<dbReference type="Ensembl" id="ENSPANT00000067785.1">
    <property type="protein sequence ID" value="ENSPANP00000060530.1"/>
    <property type="gene ID" value="ENSPANG00000048086.1"/>
</dbReference>
<dbReference type="GeneID" id="100126674"/>
<dbReference type="KEGG" id="panu:100126674"/>
<dbReference type="CTD" id="7472"/>
<dbReference type="eggNOG" id="KOG3913">
    <property type="taxonomic scope" value="Eukaryota"/>
</dbReference>
<dbReference type="GeneTree" id="ENSGT00940000159231"/>
<dbReference type="HOGENOM" id="CLU_033039_1_4_1"/>
<dbReference type="OMA" id="ITRMTKC"/>
<dbReference type="OrthoDB" id="1287at314294"/>
<dbReference type="Proteomes" id="UP000028761">
    <property type="component" value="Chromosome 4"/>
</dbReference>
<dbReference type="Bgee" id="ENSPANG00000021495">
    <property type="expression patterns" value="Expressed in Ammon's horn and 26 other cell types or tissues"/>
</dbReference>
<dbReference type="GO" id="GO:0005737">
    <property type="term" value="C:cytoplasm"/>
    <property type="evidence" value="ECO:0007669"/>
    <property type="project" value="Ensembl"/>
</dbReference>
<dbReference type="GO" id="GO:0005615">
    <property type="term" value="C:extracellular space"/>
    <property type="evidence" value="ECO:0007669"/>
    <property type="project" value="TreeGrafter"/>
</dbReference>
<dbReference type="GO" id="GO:0005125">
    <property type="term" value="F:cytokine activity"/>
    <property type="evidence" value="ECO:0007669"/>
    <property type="project" value="Ensembl"/>
</dbReference>
<dbReference type="GO" id="GO:0005109">
    <property type="term" value="F:frizzled binding"/>
    <property type="evidence" value="ECO:0007669"/>
    <property type="project" value="Ensembl"/>
</dbReference>
<dbReference type="GO" id="GO:0055009">
    <property type="term" value="P:atrial cardiac muscle tissue morphogenesis"/>
    <property type="evidence" value="ECO:0007669"/>
    <property type="project" value="Ensembl"/>
</dbReference>
<dbReference type="GO" id="GO:0060070">
    <property type="term" value="P:canonical Wnt signaling pathway"/>
    <property type="evidence" value="ECO:0007669"/>
    <property type="project" value="Ensembl"/>
</dbReference>
<dbReference type="GO" id="GO:0060317">
    <property type="term" value="P:cardiac epithelial to mesenchymal transition"/>
    <property type="evidence" value="ECO:0007669"/>
    <property type="project" value="Ensembl"/>
</dbReference>
<dbReference type="GO" id="GO:0060038">
    <property type="term" value="P:cardiac muscle cell proliferation"/>
    <property type="evidence" value="ECO:0007669"/>
    <property type="project" value="Ensembl"/>
</dbReference>
<dbReference type="GO" id="GO:0045165">
    <property type="term" value="P:cell fate commitment"/>
    <property type="evidence" value="ECO:0007669"/>
    <property type="project" value="TreeGrafter"/>
</dbReference>
<dbReference type="GO" id="GO:0033278">
    <property type="term" value="P:cell proliferation in midbrain"/>
    <property type="evidence" value="ECO:0007669"/>
    <property type="project" value="Ensembl"/>
</dbReference>
<dbReference type="GO" id="GO:0007267">
    <property type="term" value="P:cell-cell signaling"/>
    <property type="evidence" value="ECO:0007669"/>
    <property type="project" value="Ensembl"/>
</dbReference>
<dbReference type="GO" id="GO:0071560">
    <property type="term" value="P:cellular response to transforming growth factor beta stimulus"/>
    <property type="evidence" value="ECO:0007669"/>
    <property type="project" value="Ensembl"/>
</dbReference>
<dbReference type="GO" id="GO:0060502">
    <property type="term" value="P:epithelial cell proliferation involved in lung morphogenesis"/>
    <property type="evidence" value="ECO:0007669"/>
    <property type="project" value="Ensembl"/>
</dbReference>
<dbReference type="GO" id="GO:0060716">
    <property type="term" value="P:labyrinthine layer blood vessel development"/>
    <property type="evidence" value="ECO:0007669"/>
    <property type="project" value="Ensembl"/>
</dbReference>
<dbReference type="GO" id="GO:0060492">
    <property type="term" value="P:lung induction"/>
    <property type="evidence" value="ECO:0007669"/>
    <property type="project" value="Ensembl"/>
</dbReference>
<dbReference type="GO" id="GO:0061180">
    <property type="term" value="P:mammary gland epithelium development"/>
    <property type="evidence" value="ECO:0007669"/>
    <property type="project" value="Ensembl"/>
</dbReference>
<dbReference type="GO" id="GO:0010463">
    <property type="term" value="P:mesenchymal cell proliferation"/>
    <property type="evidence" value="ECO:0007669"/>
    <property type="project" value="Ensembl"/>
</dbReference>
<dbReference type="GO" id="GO:1904948">
    <property type="term" value="P:midbrain dopaminergic neuron differentiation"/>
    <property type="evidence" value="ECO:0007669"/>
    <property type="project" value="Ensembl"/>
</dbReference>
<dbReference type="GO" id="GO:0060045">
    <property type="term" value="P:positive regulation of cardiac muscle cell proliferation"/>
    <property type="evidence" value="ECO:0007669"/>
    <property type="project" value="Ensembl"/>
</dbReference>
<dbReference type="GO" id="GO:0060501">
    <property type="term" value="P:positive regulation of epithelial cell proliferation involved in lung morphogenesis"/>
    <property type="evidence" value="ECO:0007669"/>
    <property type="project" value="Ensembl"/>
</dbReference>
<dbReference type="GO" id="GO:0048146">
    <property type="term" value="P:positive regulation of fibroblast proliferation"/>
    <property type="evidence" value="ECO:0007669"/>
    <property type="project" value="Ensembl"/>
</dbReference>
<dbReference type="GO" id="GO:0002053">
    <property type="term" value="P:positive regulation of mesenchymal cell proliferation"/>
    <property type="evidence" value="ECO:0007669"/>
    <property type="project" value="Ensembl"/>
</dbReference>
<dbReference type="GO" id="GO:0050769">
    <property type="term" value="P:positive regulation of neurogenesis"/>
    <property type="evidence" value="ECO:0007669"/>
    <property type="project" value="Ensembl"/>
</dbReference>
<dbReference type="GO" id="GO:0045944">
    <property type="term" value="P:positive regulation of transcription by RNA polymerase II"/>
    <property type="evidence" value="ECO:0007669"/>
    <property type="project" value="Ensembl"/>
</dbReference>
<dbReference type="CDD" id="cd19345">
    <property type="entry name" value="Wnt_Wnt2"/>
    <property type="match status" value="1"/>
</dbReference>
<dbReference type="FunFam" id="3.30.2460.20:FF:000001">
    <property type="entry name" value="Wnt homolog"/>
    <property type="match status" value="1"/>
</dbReference>
<dbReference type="Gene3D" id="3.30.2460.20">
    <property type="match status" value="1"/>
</dbReference>
<dbReference type="InterPro" id="IPR005817">
    <property type="entry name" value="Wnt"/>
</dbReference>
<dbReference type="InterPro" id="IPR009140">
    <property type="entry name" value="Wnt2"/>
</dbReference>
<dbReference type="InterPro" id="IPR043158">
    <property type="entry name" value="Wnt_C"/>
</dbReference>
<dbReference type="InterPro" id="IPR018161">
    <property type="entry name" value="Wnt_CS"/>
</dbReference>
<dbReference type="PANTHER" id="PTHR12027:SF86">
    <property type="entry name" value="PROTEIN WNT-2"/>
    <property type="match status" value="1"/>
</dbReference>
<dbReference type="PANTHER" id="PTHR12027">
    <property type="entry name" value="WNT RELATED"/>
    <property type="match status" value="1"/>
</dbReference>
<dbReference type="Pfam" id="PF00110">
    <property type="entry name" value="wnt"/>
    <property type="match status" value="1"/>
</dbReference>
<dbReference type="PRINTS" id="PR01842">
    <property type="entry name" value="WNT2PROTEIN"/>
</dbReference>
<dbReference type="PRINTS" id="PR01349">
    <property type="entry name" value="WNTPROTEIN"/>
</dbReference>
<dbReference type="SMART" id="SM00097">
    <property type="entry name" value="WNT1"/>
    <property type="match status" value="1"/>
</dbReference>
<dbReference type="PROSITE" id="PS00246">
    <property type="entry name" value="WNT1"/>
    <property type="match status" value="1"/>
</dbReference>
<accession>A0M8S1</accession>
<name>WNT2_PAPAN</name>
<organism>
    <name type="scientific">Papio anubis</name>
    <name type="common">Olive baboon</name>
    <dbReference type="NCBI Taxonomy" id="9555"/>
    <lineage>
        <taxon>Eukaryota</taxon>
        <taxon>Metazoa</taxon>
        <taxon>Chordata</taxon>
        <taxon>Craniata</taxon>
        <taxon>Vertebrata</taxon>
        <taxon>Euteleostomi</taxon>
        <taxon>Mammalia</taxon>
        <taxon>Eutheria</taxon>
        <taxon>Euarchontoglires</taxon>
        <taxon>Primates</taxon>
        <taxon>Haplorrhini</taxon>
        <taxon>Catarrhini</taxon>
        <taxon>Cercopithecidae</taxon>
        <taxon>Cercopithecinae</taxon>
        <taxon>Papio</taxon>
    </lineage>
</organism>